<accession>Q96P70</accession>
<accession>B1ASV5</accession>
<accession>Q8N1Y1</accession>
<accession>Q8N3I2</accession>
<accession>Q8NCG9</accession>
<accession>Q96SU6</accession>
<accession>Q9NW01</accession>
<accession>Q9P0A8</accession>
<accession>Q9ULM8</accession>
<comment type="function">
    <text evidence="1 4 6 7">Nuclear transport receptor that mediates nuclear import of proteins, such as histones, proteasome and actin (PubMed:11823430, PubMed:30855230, PubMed:34711951). Serves as receptor for nuclear localization signals (NLS) in cargo substrates (PubMed:11823430). Is thought to mediate docking of the importin/substrate complex to the nuclear pore complex (NPC) through binding to nucleoporin and the complex is subsequently translocated through the pore by an energy requiring, Ran-dependent mechanism (PubMed:11823430). At the nucleoplasmic side of the NPC, Ran binds to the importin, the importin/substrate complex dissociates and importin is re-exported from the nucleus to the cytoplasm where GTP hydrolysis releases Ran (PubMed:11823430). The directionality of nuclear import is thought to be conferred by an asymmetric distribution of the GTP- and GDP-bound forms of Ran between the cytoplasm and nucleus (PubMed:11823430). Mediates the import of pre-assembled proteasomes into the nucleus; AKIRIN2 acts as a molecular bridge between IPO9 and the proteasome complex (PubMed:11823430, PubMed:34711951). Mediates the nuclear import of histones H2A, H2B, H4 and H4 (PubMed:11823430, PubMed:30855230). In addition to nuclear import, also acts as a chaperone for histones by preventing inappropriate non-nucleosomal interactions (PubMed:30855230). Mediates the nuclear import of actin (By similarity).</text>
</comment>
<comment type="subunit">
    <text evidence="4 5 6 7">Interacts with histones H2A, H2B, H3 and H4 (PubMed:11823430, PubMed:30855230). The binding is coupled to RanGTP cycles (PubMed:11823430). Interacts with AKIRIN2; promoting association with pre-assembled proteasomes (PubMed:34711951). Associates with pre-assembled proteasomes; interaction is indirect and mediated via interaction with AKIRIN2 (PubMed:34711951). Interacts with PPP2R1A and PPP2R1B (PubMed:12670497).</text>
</comment>
<comment type="subcellular location">
    <subcellularLocation>
        <location evidence="4">Cytoplasm</location>
    </subcellularLocation>
    <subcellularLocation>
        <location evidence="4">Nucleus</location>
    </subcellularLocation>
</comment>
<comment type="similarity">
    <text evidence="12">Belongs to the importin beta family.</text>
</comment>
<comment type="sequence caution" evidence="12">
    <conflict type="frameshift">
        <sequence resource="EMBL-CDS" id="AAF28951"/>
    </conflict>
</comment>
<comment type="sequence caution" evidence="12">
    <conflict type="erroneous initiation">
        <sequence resource="EMBL-CDS" id="BAA86506"/>
    </conflict>
</comment>
<comment type="sequence caution" evidence="12">
    <conflict type="erroneous initiation">
        <sequence resource="EMBL-CDS" id="BAA91588"/>
    </conflict>
</comment>
<comment type="sequence caution" evidence="12">
    <conflict type="erroneous initiation">
        <sequence resource="EMBL-CDS" id="BAB55181"/>
    </conflict>
</comment>
<comment type="sequence caution" evidence="12">
    <conflict type="erroneous initiation">
        <sequence resource="EMBL-CDS" id="BAC11173"/>
    </conflict>
</comment>
<evidence type="ECO:0000250" key="1">
    <source>
        <dbReference type="UniProtKB" id="Q91YE6"/>
    </source>
</evidence>
<evidence type="ECO:0000255" key="2">
    <source>
        <dbReference type="PROSITE-ProRule" id="PRU00115"/>
    </source>
</evidence>
<evidence type="ECO:0000256" key="3">
    <source>
        <dbReference type="SAM" id="MobiDB-lite"/>
    </source>
</evidence>
<evidence type="ECO:0000269" key="4">
    <source>
    </source>
</evidence>
<evidence type="ECO:0000269" key="5">
    <source>
    </source>
</evidence>
<evidence type="ECO:0000269" key="6">
    <source>
    </source>
</evidence>
<evidence type="ECO:0000269" key="7">
    <source>
    </source>
</evidence>
<evidence type="ECO:0000269" key="8">
    <source ref="5"/>
</evidence>
<evidence type="ECO:0000303" key="9">
    <source>
    </source>
</evidence>
<evidence type="ECO:0000303" key="10">
    <source>
    </source>
</evidence>
<evidence type="ECO:0000303" key="11">
    <source>
    </source>
</evidence>
<evidence type="ECO:0000305" key="12"/>
<evidence type="ECO:0000312" key="13">
    <source>
        <dbReference type="HGNC" id="HGNC:19425"/>
    </source>
</evidence>
<evidence type="ECO:0007744" key="14">
    <source>
        <dbReference type="PDB" id="6N1Z"/>
    </source>
</evidence>
<evidence type="ECO:0007744" key="15">
    <source>
    </source>
</evidence>
<evidence type="ECO:0007744" key="16">
    <source>
    </source>
</evidence>
<evidence type="ECO:0007744" key="17">
    <source>
    </source>
</evidence>
<evidence type="ECO:0007829" key="18">
    <source>
        <dbReference type="PDB" id="6N1Z"/>
    </source>
</evidence>
<proteinExistence type="evidence at protein level"/>
<dbReference type="EMBL" id="AF410465">
    <property type="protein sequence ID" value="AAL01416.1"/>
    <property type="molecule type" value="mRNA"/>
</dbReference>
<dbReference type="EMBL" id="AL645504">
    <property type="status" value="NOT_ANNOTATED_CDS"/>
    <property type="molecule type" value="Genomic_DNA"/>
</dbReference>
<dbReference type="EMBL" id="AK001264">
    <property type="protein sequence ID" value="BAA91588.1"/>
    <property type="status" value="ALT_INIT"/>
    <property type="molecule type" value="mRNA"/>
</dbReference>
<dbReference type="EMBL" id="AK027532">
    <property type="protein sequence ID" value="BAB55181.1"/>
    <property type="status" value="ALT_INIT"/>
    <property type="molecule type" value="mRNA"/>
</dbReference>
<dbReference type="EMBL" id="AK074740">
    <property type="protein sequence ID" value="BAC11173.1"/>
    <property type="status" value="ALT_INIT"/>
    <property type="molecule type" value="mRNA"/>
</dbReference>
<dbReference type="EMBL" id="AK094603">
    <property type="protein sequence ID" value="BAC04383.1"/>
    <property type="status" value="ALT_SEQ"/>
    <property type="molecule type" value="mRNA"/>
</dbReference>
<dbReference type="EMBL" id="CH471067">
    <property type="protein sequence ID" value="EAW91376.1"/>
    <property type="molecule type" value="Genomic_DNA"/>
</dbReference>
<dbReference type="EMBL" id="BC003604">
    <property type="protein sequence ID" value="AAH03604.2"/>
    <property type="molecule type" value="mRNA"/>
</dbReference>
<dbReference type="EMBL" id="AF161391">
    <property type="protein sequence ID" value="AAF28951.1"/>
    <property type="status" value="ALT_FRAME"/>
    <property type="molecule type" value="mRNA"/>
</dbReference>
<dbReference type="EMBL" id="AL834323">
    <property type="protein sequence ID" value="CAD38991.1"/>
    <property type="molecule type" value="mRNA"/>
</dbReference>
<dbReference type="EMBL" id="AB033018">
    <property type="protein sequence ID" value="BAA86506.1"/>
    <property type="status" value="ALT_INIT"/>
    <property type="molecule type" value="mRNA"/>
</dbReference>
<dbReference type="CCDS" id="CCDS1415.1"/>
<dbReference type="RefSeq" id="NP_060555.2">
    <property type="nucleotide sequence ID" value="NM_018085.4"/>
</dbReference>
<dbReference type="PDB" id="6N1Z">
    <property type="method" value="X-ray"/>
    <property type="resolution" value="2.70 A"/>
    <property type="chains" value="A/D=1-1041"/>
</dbReference>
<dbReference type="PDB" id="8F7A">
    <property type="method" value="EM"/>
    <property type="resolution" value="3.78 A"/>
    <property type="chains" value="A=1-1041"/>
</dbReference>
<dbReference type="PDBsum" id="6N1Z"/>
<dbReference type="PDBsum" id="8F7A"/>
<dbReference type="EMDB" id="EMD-28899"/>
<dbReference type="SMR" id="Q96P70"/>
<dbReference type="BioGRID" id="120830">
    <property type="interactions" value="245"/>
</dbReference>
<dbReference type="CORUM" id="Q96P70"/>
<dbReference type="FunCoup" id="Q96P70">
    <property type="interactions" value="4083"/>
</dbReference>
<dbReference type="IntAct" id="Q96P70">
    <property type="interactions" value="126"/>
</dbReference>
<dbReference type="MINT" id="Q96P70"/>
<dbReference type="STRING" id="9606.ENSP00000354742"/>
<dbReference type="TCDB" id="1.I.1.1.3">
    <property type="family name" value="the nuclear pore complex (npc) family"/>
</dbReference>
<dbReference type="GlyGen" id="Q96P70">
    <property type="glycosylation" value="3 sites, 1 O-linked glycan (1 site)"/>
</dbReference>
<dbReference type="iPTMnet" id="Q96P70"/>
<dbReference type="MetOSite" id="Q96P70"/>
<dbReference type="PhosphoSitePlus" id="Q96P70"/>
<dbReference type="SwissPalm" id="Q96P70"/>
<dbReference type="BioMuta" id="IPO9"/>
<dbReference type="DMDM" id="41688593"/>
<dbReference type="jPOST" id="Q96P70"/>
<dbReference type="MassIVE" id="Q96P70"/>
<dbReference type="PaxDb" id="9606-ENSP00000354742"/>
<dbReference type="PeptideAtlas" id="Q96P70"/>
<dbReference type="ProteomicsDB" id="77644"/>
<dbReference type="Pumba" id="Q96P70"/>
<dbReference type="Antibodypedia" id="34514">
    <property type="antibodies" value="172 antibodies from 29 providers"/>
</dbReference>
<dbReference type="DNASU" id="55705"/>
<dbReference type="Ensembl" id="ENST00000361565.9">
    <property type="protein sequence ID" value="ENSP00000354742.4"/>
    <property type="gene ID" value="ENSG00000198700.10"/>
</dbReference>
<dbReference type="GeneID" id="55705"/>
<dbReference type="KEGG" id="hsa:55705"/>
<dbReference type="MANE-Select" id="ENST00000361565.9">
    <property type="protein sequence ID" value="ENSP00000354742.4"/>
    <property type="RefSeq nucleotide sequence ID" value="NM_018085.5"/>
    <property type="RefSeq protein sequence ID" value="NP_060555.2"/>
</dbReference>
<dbReference type="UCSC" id="uc001gwz.4">
    <property type="organism name" value="human"/>
</dbReference>
<dbReference type="AGR" id="HGNC:19425"/>
<dbReference type="CTD" id="55705"/>
<dbReference type="DisGeNET" id="55705"/>
<dbReference type="GeneCards" id="IPO9"/>
<dbReference type="HGNC" id="HGNC:19425">
    <property type="gene designation" value="IPO9"/>
</dbReference>
<dbReference type="HPA" id="ENSG00000198700">
    <property type="expression patterns" value="Low tissue specificity"/>
</dbReference>
<dbReference type="MIM" id="620893">
    <property type="type" value="gene"/>
</dbReference>
<dbReference type="neXtProt" id="NX_Q96P70"/>
<dbReference type="OpenTargets" id="ENSG00000198700"/>
<dbReference type="PharmGKB" id="PA134930111"/>
<dbReference type="VEuPathDB" id="HostDB:ENSG00000198700"/>
<dbReference type="eggNOG" id="KOG2274">
    <property type="taxonomic scope" value="Eukaryota"/>
</dbReference>
<dbReference type="GeneTree" id="ENSGT00390000008224"/>
<dbReference type="HOGENOM" id="CLU_008920_0_0_1"/>
<dbReference type="InParanoid" id="Q96P70"/>
<dbReference type="OMA" id="NPDQYTI"/>
<dbReference type="OrthoDB" id="431626at2759"/>
<dbReference type="PAN-GO" id="Q96P70">
    <property type="GO annotations" value="3 GO annotations based on evolutionary models"/>
</dbReference>
<dbReference type="PhylomeDB" id="Q96P70"/>
<dbReference type="TreeFam" id="TF323706"/>
<dbReference type="PathwayCommons" id="Q96P70"/>
<dbReference type="SignaLink" id="Q96P70"/>
<dbReference type="BioGRID-ORCS" id="55705">
    <property type="hits" value="502 hits in 1181 CRISPR screens"/>
</dbReference>
<dbReference type="ChiTaRS" id="IPO9">
    <property type="organism name" value="human"/>
</dbReference>
<dbReference type="GeneWiki" id="IPO9"/>
<dbReference type="GenomeRNAi" id="55705"/>
<dbReference type="Pharos" id="Q96P70">
    <property type="development level" value="Tbio"/>
</dbReference>
<dbReference type="PRO" id="PR:Q96P70"/>
<dbReference type="Proteomes" id="UP000005640">
    <property type="component" value="Chromosome 1"/>
</dbReference>
<dbReference type="RNAct" id="Q96P70">
    <property type="molecule type" value="protein"/>
</dbReference>
<dbReference type="Bgee" id="ENSG00000198700">
    <property type="expression patterns" value="Expressed in nipple and 212 other cell types or tissues"/>
</dbReference>
<dbReference type="ExpressionAtlas" id="Q96P70">
    <property type="expression patterns" value="baseline and differential"/>
</dbReference>
<dbReference type="GO" id="GO:0005737">
    <property type="term" value="C:cytoplasm"/>
    <property type="evidence" value="ECO:0000314"/>
    <property type="project" value="UniProtKB"/>
</dbReference>
<dbReference type="GO" id="GO:0005829">
    <property type="term" value="C:cytosol"/>
    <property type="evidence" value="ECO:0000314"/>
    <property type="project" value="HPA"/>
</dbReference>
<dbReference type="GO" id="GO:0016020">
    <property type="term" value="C:membrane"/>
    <property type="evidence" value="ECO:0007005"/>
    <property type="project" value="UniProtKB"/>
</dbReference>
<dbReference type="GO" id="GO:0005635">
    <property type="term" value="C:nuclear envelope"/>
    <property type="evidence" value="ECO:0000318"/>
    <property type="project" value="GO_Central"/>
</dbReference>
<dbReference type="GO" id="GO:0005654">
    <property type="term" value="C:nucleoplasm"/>
    <property type="evidence" value="ECO:0000314"/>
    <property type="project" value="HPA"/>
</dbReference>
<dbReference type="GO" id="GO:0042393">
    <property type="term" value="F:histone binding"/>
    <property type="evidence" value="ECO:0000314"/>
    <property type="project" value="UniProtKB"/>
</dbReference>
<dbReference type="GO" id="GO:0140713">
    <property type="term" value="F:histone chaperone activity"/>
    <property type="evidence" value="ECO:0000314"/>
    <property type="project" value="UniProtKB"/>
</dbReference>
<dbReference type="GO" id="GO:0061608">
    <property type="term" value="F:nuclear import signal receptor activity"/>
    <property type="evidence" value="ECO:0000314"/>
    <property type="project" value="UniProtKB"/>
</dbReference>
<dbReference type="GO" id="GO:0031267">
    <property type="term" value="F:small GTPase binding"/>
    <property type="evidence" value="ECO:0007669"/>
    <property type="project" value="InterPro"/>
</dbReference>
<dbReference type="GO" id="GO:0031144">
    <property type="term" value="P:proteasome localization"/>
    <property type="evidence" value="ECO:0000314"/>
    <property type="project" value="UniProtKB"/>
</dbReference>
<dbReference type="GO" id="GO:0006606">
    <property type="term" value="P:protein import into nucleus"/>
    <property type="evidence" value="ECO:0000314"/>
    <property type="project" value="UniProtKB"/>
</dbReference>
<dbReference type="Gene3D" id="1.25.10.10">
    <property type="entry name" value="Leucine-rich Repeat Variant"/>
    <property type="match status" value="1"/>
</dbReference>
<dbReference type="InterPro" id="IPR011989">
    <property type="entry name" value="ARM-like"/>
</dbReference>
<dbReference type="InterPro" id="IPR016024">
    <property type="entry name" value="ARM-type_fold"/>
</dbReference>
<dbReference type="InterPro" id="IPR056840">
    <property type="entry name" value="HEAT_IPO9_central"/>
</dbReference>
<dbReference type="InterPro" id="IPR001494">
    <property type="entry name" value="Importin-beta_N"/>
</dbReference>
<dbReference type="PANTHER" id="PTHR10997">
    <property type="entry name" value="IMPORTIN-7, 8, 11"/>
    <property type="match status" value="1"/>
</dbReference>
<dbReference type="PANTHER" id="PTHR10997:SF9">
    <property type="entry name" value="IMPORTIN-9"/>
    <property type="match status" value="1"/>
</dbReference>
<dbReference type="Pfam" id="PF25018">
    <property type="entry name" value="HEAT_IPO9_c"/>
    <property type="match status" value="1"/>
</dbReference>
<dbReference type="Pfam" id="PF03810">
    <property type="entry name" value="IBN_N"/>
    <property type="match status" value="1"/>
</dbReference>
<dbReference type="SMART" id="SM00913">
    <property type="entry name" value="IBN_N"/>
    <property type="match status" value="1"/>
</dbReference>
<dbReference type="SUPFAM" id="SSF48371">
    <property type="entry name" value="ARM repeat"/>
    <property type="match status" value="1"/>
</dbReference>
<dbReference type="PROSITE" id="PS50166">
    <property type="entry name" value="IMPORTIN_B_NT"/>
    <property type="match status" value="1"/>
</dbReference>
<reference key="1">
    <citation type="journal article" date="2002" name="EMBO J.">
        <title>Importins fulfill a dual function as nuclear import receptors and cytoplasmic chaperones for exposed basic domains.</title>
        <authorList>
            <person name="Jaekel S."/>
            <person name="Mingot J.-M."/>
            <person name="Schwarzmaier P."/>
            <person name="Hartmann E."/>
            <person name="Goerlich D."/>
        </authorList>
    </citation>
    <scope>NUCLEOTIDE SEQUENCE [MRNA]</scope>
    <scope>FUNCTION</scope>
    <scope>INTERACTION WITH RPS7; RPL18A; RPL4 AND RPL6</scope>
</reference>
<reference key="2">
    <citation type="journal article" date="2006" name="Nature">
        <title>The DNA sequence and biological annotation of human chromosome 1.</title>
        <authorList>
            <person name="Gregory S.G."/>
            <person name="Barlow K.F."/>
            <person name="McLay K.E."/>
            <person name="Kaul R."/>
            <person name="Swarbreck D."/>
            <person name="Dunham A."/>
            <person name="Scott C.E."/>
            <person name="Howe K.L."/>
            <person name="Woodfine K."/>
            <person name="Spencer C.C.A."/>
            <person name="Jones M.C."/>
            <person name="Gillson C."/>
            <person name="Searle S."/>
            <person name="Zhou Y."/>
            <person name="Kokocinski F."/>
            <person name="McDonald L."/>
            <person name="Evans R."/>
            <person name="Phillips K."/>
            <person name="Atkinson A."/>
            <person name="Cooper R."/>
            <person name="Jones C."/>
            <person name="Hall R.E."/>
            <person name="Andrews T.D."/>
            <person name="Lloyd C."/>
            <person name="Ainscough R."/>
            <person name="Almeida J.P."/>
            <person name="Ambrose K.D."/>
            <person name="Anderson F."/>
            <person name="Andrew R.W."/>
            <person name="Ashwell R.I.S."/>
            <person name="Aubin K."/>
            <person name="Babbage A.K."/>
            <person name="Bagguley C.L."/>
            <person name="Bailey J."/>
            <person name="Beasley H."/>
            <person name="Bethel G."/>
            <person name="Bird C.P."/>
            <person name="Bray-Allen S."/>
            <person name="Brown J.Y."/>
            <person name="Brown A.J."/>
            <person name="Buckley D."/>
            <person name="Burton J."/>
            <person name="Bye J."/>
            <person name="Carder C."/>
            <person name="Chapman J.C."/>
            <person name="Clark S.Y."/>
            <person name="Clarke G."/>
            <person name="Clee C."/>
            <person name="Cobley V."/>
            <person name="Collier R.E."/>
            <person name="Corby N."/>
            <person name="Coville G.J."/>
            <person name="Davies J."/>
            <person name="Deadman R."/>
            <person name="Dunn M."/>
            <person name="Earthrowl M."/>
            <person name="Ellington A.G."/>
            <person name="Errington H."/>
            <person name="Frankish A."/>
            <person name="Frankland J."/>
            <person name="French L."/>
            <person name="Garner P."/>
            <person name="Garnett J."/>
            <person name="Gay L."/>
            <person name="Ghori M.R.J."/>
            <person name="Gibson R."/>
            <person name="Gilby L.M."/>
            <person name="Gillett W."/>
            <person name="Glithero R.J."/>
            <person name="Grafham D.V."/>
            <person name="Griffiths C."/>
            <person name="Griffiths-Jones S."/>
            <person name="Grocock R."/>
            <person name="Hammond S."/>
            <person name="Harrison E.S.I."/>
            <person name="Hart E."/>
            <person name="Haugen E."/>
            <person name="Heath P.D."/>
            <person name="Holmes S."/>
            <person name="Holt K."/>
            <person name="Howden P.J."/>
            <person name="Hunt A.R."/>
            <person name="Hunt S.E."/>
            <person name="Hunter G."/>
            <person name="Isherwood J."/>
            <person name="James R."/>
            <person name="Johnson C."/>
            <person name="Johnson D."/>
            <person name="Joy A."/>
            <person name="Kay M."/>
            <person name="Kershaw J.K."/>
            <person name="Kibukawa M."/>
            <person name="Kimberley A.M."/>
            <person name="King A."/>
            <person name="Knights A.J."/>
            <person name="Lad H."/>
            <person name="Laird G."/>
            <person name="Lawlor S."/>
            <person name="Leongamornlert D.A."/>
            <person name="Lloyd D.M."/>
            <person name="Loveland J."/>
            <person name="Lovell J."/>
            <person name="Lush M.J."/>
            <person name="Lyne R."/>
            <person name="Martin S."/>
            <person name="Mashreghi-Mohammadi M."/>
            <person name="Matthews L."/>
            <person name="Matthews N.S.W."/>
            <person name="McLaren S."/>
            <person name="Milne S."/>
            <person name="Mistry S."/>
            <person name="Moore M.J.F."/>
            <person name="Nickerson T."/>
            <person name="O'Dell C.N."/>
            <person name="Oliver K."/>
            <person name="Palmeiri A."/>
            <person name="Palmer S.A."/>
            <person name="Parker A."/>
            <person name="Patel D."/>
            <person name="Pearce A.V."/>
            <person name="Peck A.I."/>
            <person name="Pelan S."/>
            <person name="Phelps K."/>
            <person name="Phillimore B.J."/>
            <person name="Plumb R."/>
            <person name="Rajan J."/>
            <person name="Raymond C."/>
            <person name="Rouse G."/>
            <person name="Saenphimmachak C."/>
            <person name="Sehra H.K."/>
            <person name="Sheridan E."/>
            <person name="Shownkeen R."/>
            <person name="Sims S."/>
            <person name="Skuce C.D."/>
            <person name="Smith M."/>
            <person name="Steward C."/>
            <person name="Subramanian S."/>
            <person name="Sycamore N."/>
            <person name="Tracey A."/>
            <person name="Tromans A."/>
            <person name="Van Helmond Z."/>
            <person name="Wall M."/>
            <person name="Wallis J.M."/>
            <person name="White S."/>
            <person name="Whitehead S.L."/>
            <person name="Wilkinson J.E."/>
            <person name="Willey D.L."/>
            <person name="Williams H."/>
            <person name="Wilming L."/>
            <person name="Wray P.W."/>
            <person name="Wu Z."/>
            <person name="Coulson A."/>
            <person name="Vaudin M."/>
            <person name="Sulston J.E."/>
            <person name="Durbin R.M."/>
            <person name="Hubbard T."/>
            <person name="Wooster R."/>
            <person name="Dunham I."/>
            <person name="Carter N.P."/>
            <person name="McVean G."/>
            <person name="Ross M.T."/>
            <person name="Harrow J."/>
            <person name="Olson M.V."/>
            <person name="Beck S."/>
            <person name="Rogers J."/>
            <person name="Bentley D.R."/>
        </authorList>
    </citation>
    <scope>NUCLEOTIDE SEQUENCE [LARGE SCALE GENOMIC DNA]</scope>
</reference>
<reference key="3">
    <citation type="submission" date="2005-07" db="EMBL/GenBank/DDBJ databases">
        <authorList>
            <person name="Mural R.J."/>
            <person name="Istrail S."/>
            <person name="Sutton G.G."/>
            <person name="Florea L."/>
            <person name="Halpern A.L."/>
            <person name="Mobarry C.M."/>
            <person name="Lippert R."/>
            <person name="Walenz B."/>
            <person name="Shatkay H."/>
            <person name="Dew I."/>
            <person name="Miller J.R."/>
            <person name="Flanigan M.J."/>
            <person name="Edwards N.J."/>
            <person name="Bolanos R."/>
            <person name="Fasulo D."/>
            <person name="Halldorsson B.V."/>
            <person name="Hannenhalli S."/>
            <person name="Turner R."/>
            <person name="Yooseph S."/>
            <person name="Lu F."/>
            <person name="Nusskern D.R."/>
            <person name="Shue B.C."/>
            <person name="Zheng X.H."/>
            <person name="Zhong F."/>
            <person name="Delcher A.L."/>
            <person name="Huson D.H."/>
            <person name="Kravitz S.A."/>
            <person name="Mouchard L."/>
            <person name="Reinert K."/>
            <person name="Remington K.A."/>
            <person name="Clark A.G."/>
            <person name="Waterman M.S."/>
            <person name="Eichler E.E."/>
            <person name="Adams M.D."/>
            <person name="Hunkapiller M.W."/>
            <person name="Myers E.W."/>
            <person name="Venter J.C."/>
        </authorList>
    </citation>
    <scope>NUCLEOTIDE SEQUENCE [LARGE SCALE GENOMIC DNA]</scope>
</reference>
<reference key="4">
    <citation type="journal article" date="2004" name="Nat. Genet.">
        <title>Complete sequencing and characterization of 21,243 full-length human cDNAs.</title>
        <authorList>
            <person name="Ota T."/>
            <person name="Suzuki Y."/>
            <person name="Nishikawa T."/>
            <person name="Otsuki T."/>
            <person name="Sugiyama T."/>
            <person name="Irie R."/>
            <person name="Wakamatsu A."/>
            <person name="Hayashi K."/>
            <person name="Sato H."/>
            <person name="Nagai K."/>
            <person name="Kimura K."/>
            <person name="Makita H."/>
            <person name="Sekine M."/>
            <person name="Obayashi M."/>
            <person name="Nishi T."/>
            <person name="Shibahara T."/>
            <person name="Tanaka T."/>
            <person name="Ishii S."/>
            <person name="Yamamoto J."/>
            <person name="Saito K."/>
            <person name="Kawai Y."/>
            <person name="Isono Y."/>
            <person name="Nakamura Y."/>
            <person name="Nagahari K."/>
            <person name="Murakami K."/>
            <person name="Yasuda T."/>
            <person name="Iwayanagi T."/>
            <person name="Wagatsuma M."/>
            <person name="Shiratori A."/>
            <person name="Sudo H."/>
            <person name="Hosoiri T."/>
            <person name="Kaku Y."/>
            <person name="Kodaira H."/>
            <person name="Kondo H."/>
            <person name="Sugawara M."/>
            <person name="Takahashi M."/>
            <person name="Kanda K."/>
            <person name="Yokoi T."/>
            <person name="Furuya T."/>
            <person name="Kikkawa E."/>
            <person name="Omura Y."/>
            <person name="Abe K."/>
            <person name="Kamihara K."/>
            <person name="Katsuta N."/>
            <person name="Sato K."/>
            <person name="Tanikawa M."/>
            <person name="Yamazaki M."/>
            <person name="Ninomiya K."/>
            <person name="Ishibashi T."/>
            <person name="Yamashita H."/>
            <person name="Murakawa K."/>
            <person name="Fujimori K."/>
            <person name="Tanai H."/>
            <person name="Kimata M."/>
            <person name="Watanabe M."/>
            <person name="Hiraoka S."/>
            <person name="Chiba Y."/>
            <person name="Ishida S."/>
            <person name="Ono Y."/>
            <person name="Takiguchi S."/>
            <person name="Watanabe S."/>
            <person name="Yosida M."/>
            <person name="Hotuta T."/>
            <person name="Kusano J."/>
            <person name="Kanehori K."/>
            <person name="Takahashi-Fujii A."/>
            <person name="Hara H."/>
            <person name="Tanase T.-O."/>
            <person name="Nomura Y."/>
            <person name="Togiya S."/>
            <person name="Komai F."/>
            <person name="Hara R."/>
            <person name="Takeuchi K."/>
            <person name="Arita M."/>
            <person name="Imose N."/>
            <person name="Musashino K."/>
            <person name="Yuuki H."/>
            <person name="Oshima A."/>
            <person name="Sasaki N."/>
            <person name="Aotsuka S."/>
            <person name="Yoshikawa Y."/>
            <person name="Matsunawa H."/>
            <person name="Ichihara T."/>
            <person name="Shiohata N."/>
            <person name="Sano S."/>
            <person name="Moriya S."/>
            <person name="Momiyama H."/>
            <person name="Satoh N."/>
            <person name="Takami S."/>
            <person name="Terashima Y."/>
            <person name="Suzuki O."/>
            <person name="Nakagawa S."/>
            <person name="Senoh A."/>
            <person name="Mizoguchi H."/>
            <person name="Goto Y."/>
            <person name="Shimizu F."/>
            <person name="Wakebe H."/>
            <person name="Hishigaki H."/>
            <person name="Watanabe T."/>
            <person name="Sugiyama A."/>
            <person name="Takemoto M."/>
            <person name="Kawakami B."/>
            <person name="Yamazaki M."/>
            <person name="Watanabe K."/>
            <person name="Kumagai A."/>
            <person name="Itakura S."/>
            <person name="Fukuzumi Y."/>
            <person name="Fujimori Y."/>
            <person name="Komiyama M."/>
            <person name="Tashiro H."/>
            <person name="Tanigami A."/>
            <person name="Fujiwara T."/>
            <person name="Ono T."/>
            <person name="Yamada K."/>
            <person name="Fujii Y."/>
            <person name="Ozaki K."/>
            <person name="Hirao M."/>
            <person name="Ohmori Y."/>
            <person name="Kawabata A."/>
            <person name="Hikiji T."/>
            <person name="Kobatake N."/>
            <person name="Inagaki H."/>
            <person name="Ikema Y."/>
            <person name="Okamoto S."/>
            <person name="Okitani R."/>
            <person name="Kawakami T."/>
            <person name="Noguchi S."/>
            <person name="Itoh T."/>
            <person name="Shigeta K."/>
            <person name="Senba T."/>
            <person name="Matsumura K."/>
            <person name="Nakajima Y."/>
            <person name="Mizuno T."/>
            <person name="Morinaga M."/>
            <person name="Sasaki M."/>
            <person name="Togashi T."/>
            <person name="Oyama M."/>
            <person name="Hata H."/>
            <person name="Watanabe M."/>
            <person name="Komatsu T."/>
            <person name="Mizushima-Sugano J."/>
            <person name="Satoh T."/>
            <person name="Shirai Y."/>
            <person name="Takahashi Y."/>
            <person name="Nakagawa K."/>
            <person name="Okumura K."/>
            <person name="Nagase T."/>
            <person name="Nomura N."/>
            <person name="Kikuchi H."/>
            <person name="Masuho Y."/>
            <person name="Yamashita R."/>
            <person name="Nakai K."/>
            <person name="Yada T."/>
            <person name="Nakamura Y."/>
            <person name="Ohara O."/>
            <person name="Isogai T."/>
            <person name="Sugano S."/>
        </authorList>
    </citation>
    <scope>NUCLEOTIDE SEQUENCE [LARGE SCALE MRNA] OF 1-276 AND 358-1041</scope>
    <source>
        <tissue>Amygdala</tissue>
    </source>
</reference>
<reference key="5">
    <citation type="submission" date="2005-06" db="UniProtKB">
        <authorList>
            <person name="Bienvenut W.V."/>
        </authorList>
    </citation>
    <scope>PROTEIN SEQUENCE OF 2-22; 400-427 AND 908-916</scope>
    <scope>CLEAVAGE OF INITIATOR METHIONINE</scope>
    <scope>ACETYLATION AT ALA-2</scope>
    <scope>IDENTIFICATION BY MASS SPECTROMETRY</scope>
    <source>
        <tissue>B-cell lymphoma</tissue>
    </source>
</reference>
<reference key="6">
    <citation type="journal article" date="2004" name="Genome Res.">
        <title>The status, quality, and expansion of the NIH full-length cDNA project: the Mammalian Gene Collection (MGC).</title>
        <authorList>
            <consortium name="The MGC Project Team"/>
        </authorList>
    </citation>
    <scope>NUCLEOTIDE SEQUENCE [LARGE SCALE MRNA] OF 406-1041</scope>
    <source>
        <tissue>Placenta</tissue>
    </source>
</reference>
<reference key="7">
    <citation type="journal article" date="2007" name="BMC Genomics">
        <title>The full-ORF clone resource of the German cDNA consortium.</title>
        <authorList>
            <person name="Bechtel S."/>
            <person name="Rosenfelder H."/>
            <person name="Duda A."/>
            <person name="Schmidt C.P."/>
            <person name="Ernst U."/>
            <person name="Wellenreuther R."/>
            <person name="Mehrle A."/>
            <person name="Schuster C."/>
            <person name="Bahr A."/>
            <person name="Bloecker H."/>
            <person name="Heubner D."/>
            <person name="Hoerlein A."/>
            <person name="Michel G."/>
            <person name="Wedler H."/>
            <person name="Koehrer K."/>
            <person name="Ottenwaelder B."/>
            <person name="Poustka A."/>
            <person name="Wiemann S."/>
            <person name="Schupp I."/>
        </authorList>
    </citation>
    <scope>NUCLEOTIDE SEQUENCE [LARGE SCALE MRNA] OF 632-1041</scope>
    <source>
        <tissue>Amygdala</tissue>
    </source>
</reference>
<reference key="8">
    <citation type="journal article" date="2000" name="Genome Res.">
        <title>Cloning and functional analysis of cDNAs with open reading frames for 300 previously undefined genes expressed in CD34+ hematopoietic stem/progenitor cells.</title>
        <authorList>
            <person name="Zhang Q.-H."/>
            <person name="Ye M."/>
            <person name="Wu X.-Y."/>
            <person name="Ren S.-X."/>
            <person name="Zhao M."/>
            <person name="Zhao C.-J."/>
            <person name="Fu G."/>
            <person name="Shen Y."/>
            <person name="Fan H.-Y."/>
            <person name="Lu G."/>
            <person name="Zhong M."/>
            <person name="Xu X.-R."/>
            <person name="Han Z.-G."/>
            <person name="Zhang J.-W."/>
            <person name="Tao J."/>
            <person name="Huang Q.-H."/>
            <person name="Zhou J."/>
            <person name="Hu G.-X."/>
            <person name="Gu J."/>
            <person name="Chen S.-J."/>
            <person name="Chen Z."/>
        </authorList>
    </citation>
    <scope>NUCLEOTIDE SEQUENCE [LARGE SCALE MRNA] OF 767-1041</scope>
    <source>
        <tissue>Umbilical cord blood</tissue>
    </source>
</reference>
<reference key="9">
    <citation type="journal article" date="1999" name="DNA Res.">
        <title>Characterization of cDNA clones selected by the GeneMark analysis from size-fractionated cDNA libraries from human brain.</title>
        <authorList>
            <person name="Hirosawa M."/>
            <person name="Nagase T."/>
            <person name="Ishikawa K."/>
            <person name="Kikuno R."/>
            <person name="Nomura N."/>
            <person name="Ohara O."/>
        </authorList>
    </citation>
    <scope>NUCLEOTIDE SEQUENCE [LARGE SCALE MRNA] OF 780-1041</scope>
    <source>
        <tissue>Brain</tissue>
    </source>
</reference>
<reference key="10">
    <citation type="journal article" date="2003" name="Biochem. Biophys. Res. Commun.">
        <title>Interaction between protein phosphatase 2A and members of the importin beta superfamily.</title>
        <authorList>
            <person name="Lubert E.J."/>
            <person name="Sarge K.D."/>
        </authorList>
    </citation>
    <scope>INTERACTION WITH PPP2R1A AND PPP2R1B</scope>
</reference>
<reference key="11">
    <citation type="journal article" date="2008" name="Mol. Cell">
        <title>Kinase-selective enrichment enables quantitative phosphoproteomics of the kinome across the cell cycle.</title>
        <authorList>
            <person name="Daub H."/>
            <person name="Olsen J.V."/>
            <person name="Bairlein M."/>
            <person name="Gnad F."/>
            <person name="Oppermann F.S."/>
            <person name="Korner R."/>
            <person name="Greff Z."/>
            <person name="Keri G."/>
            <person name="Stemmann O."/>
            <person name="Mann M."/>
        </authorList>
    </citation>
    <scope>IDENTIFICATION BY MASS SPECTROMETRY [LARGE SCALE ANALYSIS]</scope>
    <source>
        <tissue>Cervix carcinoma</tissue>
    </source>
</reference>
<reference key="12">
    <citation type="journal article" date="2009" name="Anal. Chem.">
        <title>Lys-N and trypsin cover complementary parts of the phosphoproteome in a refined SCX-based approach.</title>
        <authorList>
            <person name="Gauci S."/>
            <person name="Helbig A.O."/>
            <person name="Slijper M."/>
            <person name="Krijgsveld J."/>
            <person name="Heck A.J."/>
            <person name="Mohammed S."/>
        </authorList>
    </citation>
    <scope>ACETYLATION [LARGE SCALE ANALYSIS] AT ALA-2</scope>
    <scope>CLEAVAGE OF INITIATOR METHIONINE [LARGE SCALE ANALYSIS]</scope>
    <scope>IDENTIFICATION BY MASS SPECTROMETRY [LARGE SCALE ANALYSIS]</scope>
</reference>
<reference key="13">
    <citation type="journal article" date="2011" name="BMC Syst. Biol.">
        <title>Initial characterization of the human central proteome.</title>
        <authorList>
            <person name="Burkard T.R."/>
            <person name="Planyavsky M."/>
            <person name="Kaupe I."/>
            <person name="Breitwieser F.P."/>
            <person name="Buerckstuemmer T."/>
            <person name="Bennett K.L."/>
            <person name="Superti-Furga G."/>
            <person name="Colinge J."/>
        </authorList>
    </citation>
    <scope>IDENTIFICATION BY MASS SPECTROMETRY [LARGE SCALE ANALYSIS]</scope>
</reference>
<reference key="14">
    <citation type="journal article" date="2012" name="Mol. Cell. Proteomics">
        <title>Comparative large-scale characterisation of plant vs. mammal proteins reveals similar and idiosyncratic N-alpha acetylation features.</title>
        <authorList>
            <person name="Bienvenut W.V."/>
            <person name="Sumpton D."/>
            <person name="Martinez A."/>
            <person name="Lilla S."/>
            <person name="Espagne C."/>
            <person name="Meinnel T."/>
            <person name="Giglione C."/>
        </authorList>
    </citation>
    <scope>ACETYLATION [LARGE SCALE ANALYSIS] AT ALA-2</scope>
    <scope>CLEAVAGE OF INITIATOR METHIONINE [LARGE SCALE ANALYSIS]</scope>
    <scope>IDENTIFICATION BY MASS SPECTROMETRY [LARGE SCALE ANALYSIS]</scope>
</reference>
<reference key="15">
    <citation type="journal article" date="2015" name="Proteomics">
        <title>N-terminome analysis of the human mitochondrial proteome.</title>
        <authorList>
            <person name="Vaca Jacome A.S."/>
            <person name="Rabilloud T."/>
            <person name="Schaeffer-Reiss C."/>
            <person name="Rompais M."/>
            <person name="Ayoub D."/>
            <person name="Lane L."/>
            <person name="Bairoch A."/>
            <person name="Van Dorsselaer A."/>
            <person name="Carapito C."/>
        </authorList>
    </citation>
    <scope>ACETYLATION [LARGE SCALE ANALYSIS] AT ALA-2</scope>
    <scope>CLEAVAGE OF INITIATOR METHIONINE [LARGE SCALE ANALYSIS]</scope>
    <scope>IDENTIFICATION BY MASS SPECTROMETRY [LARGE SCALE ANALYSIS]</scope>
</reference>
<reference key="16">
    <citation type="journal article" date="2021" name="Nature">
        <title>AKIRIN2 controls the nuclear import of proteasomes in vertebrates.</title>
        <authorList>
            <person name="de Almeida M."/>
            <person name="Hinterndorfer M."/>
            <person name="Brunner H."/>
            <person name="Grishkovskaya I."/>
            <person name="Singh K."/>
            <person name="Schleiffer A."/>
            <person name="Jude J."/>
            <person name="Deswal S."/>
            <person name="Kalis R."/>
            <person name="Vunjak M."/>
            <person name="Lendl T."/>
            <person name="Imre R."/>
            <person name="Roitinger E."/>
            <person name="Neumann T."/>
            <person name="Kandolf S."/>
            <person name="Schutzbier M."/>
            <person name="Mechtler K."/>
            <person name="Versteeg G.A."/>
            <person name="Haselbach D."/>
            <person name="Zuber J."/>
        </authorList>
    </citation>
    <scope>FUNCTION</scope>
    <scope>SUBUNIT</scope>
    <scope>INTERACTION WITH AKIRIN2</scope>
</reference>
<reference evidence="14" key="17">
    <citation type="journal article" date="2019" name="Elife">
        <title>Importin-9 wraps around the H2A-H2B core to act as nuclear importer and histone chaperone.</title>
        <authorList>
            <person name="Padavannil A."/>
            <person name="Sarkar P."/>
            <person name="Kim S.J."/>
            <person name="Cagatay T."/>
            <person name="Jiou J."/>
            <person name="Brautigam C.A."/>
            <person name="Tomchick D.R."/>
            <person name="Sali A."/>
            <person name="D'Arcy S."/>
            <person name="Chook Y.M."/>
        </authorList>
    </citation>
    <scope>X-RAY CRYSTALLOGRAPHY (2.70 ANGSTROMS) IN COMPLEX WITH HISTONE H2A AND H2B</scope>
    <scope>FUNCTION</scope>
    <scope>SUBUNIT</scope>
</reference>
<keyword id="KW-0002">3D-structure</keyword>
<keyword id="KW-0007">Acetylation</keyword>
<keyword id="KW-0143">Chaperone</keyword>
<keyword id="KW-0963">Cytoplasm</keyword>
<keyword id="KW-0903">Direct protein sequencing</keyword>
<keyword id="KW-0539">Nucleus</keyword>
<keyword id="KW-0653">Protein transport</keyword>
<keyword id="KW-1267">Proteomics identification</keyword>
<keyword id="KW-1185">Reference proteome</keyword>
<keyword id="KW-0813">Transport</keyword>
<gene>
    <name evidence="11 13" type="primary">IPO9</name>
    <name evidence="10" type="synonym">IMP9</name>
    <name evidence="9" type="synonym">KIAA1192</name>
    <name type="synonym">RANBP9</name>
    <name type="ORF">HSPC273</name>
</gene>
<feature type="initiator methionine" description="Removed" evidence="8 15 16 17">
    <location>
        <position position="1"/>
    </location>
</feature>
<feature type="chain" id="PRO_0000120754" description="Importin-9">
    <location>
        <begin position="2"/>
        <end position="1041"/>
    </location>
</feature>
<feature type="domain" description="Importin N-terminal" evidence="2">
    <location>
        <begin position="43"/>
        <end position="119"/>
    </location>
</feature>
<feature type="region of interest" description="Disordered" evidence="3">
    <location>
        <begin position="936"/>
        <end position="967"/>
    </location>
</feature>
<feature type="compositionally biased region" description="Acidic residues" evidence="3">
    <location>
        <begin position="943"/>
        <end position="964"/>
    </location>
</feature>
<feature type="modified residue" description="N-acetylalanine" evidence="8 15 16 17">
    <location>
        <position position="2"/>
    </location>
</feature>
<feature type="sequence conflict" description="In Ref. 4; BAC11173." evidence="12" ref="4">
    <original>E</original>
    <variation>G</variation>
    <location>
        <position position="632"/>
    </location>
</feature>
<feature type="sequence conflict" description="In Ref. 4; BAC11173." evidence="12" ref="4">
    <original>K</original>
    <variation>R</variation>
    <location>
        <position position="916"/>
    </location>
</feature>
<feature type="sequence conflict" description="In Ref. 4; BAB55181." evidence="12" ref="4">
    <original>R</original>
    <variation>P</variation>
    <location>
        <position position="935"/>
    </location>
</feature>
<feature type="sequence conflict" description="In Ref. 4; BAC11173." evidence="12" ref="4">
    <original>E</original>
    <variation>G</variation>
    <location>
        <position position="960"/>
    </location>
</feature>
<feature type="helix" evidence="18">
    <location>
        <begin position="16"/>
        <end position="32"/>
    </location>
</feature>
<feature type="helix" evidence="18">
    <location>
        <begin position="37"/>
        <end position="50"/>
    </location>
</feature>
<feature type="helix" evidence="18">
    <location>
        <begin position="56"/>
        <end position="65"/>
    </location>
</feature>
<feature type="helix" evidence="18">
    <location>
        <begin position="71"/>
        <end position="88"/>
    </location>
</feature>
<feature type="helix" evidence="18">
    <location>
        <begin position="103"/>
        <end position="112"/>
    </location>
</feature>
<feature type="helix" evidence="18">
    <location>
        <begin position="113"/>
        <end position="118"/>
    </location>
</feature>
<feature type="helix" evidence="18">
    <location>
        <begin position="122"/>
        <end position="139"/>
    </location>
</feature>
<feature type="turn" evidence="18">
    <location>
        <begin position="140"/>
        <end position="143"/>
    </location>
</feature>
<feature type="helix" evidence="18">
    <location>
        <begin position="147"/>
        <end position="156"/>
    </location>
</feature>
<feature type="helix" evidence="18">
    <location>
        <begin position="160"/>
        <end position="174"/>
    </location>
</feature>
<feature type="turn" evidence="18">
    <location>
        <begin position="179"/>
        <end position="181"/>
    </location>
</feature>
<feature type="helix" evidence="18">
    <location>
        <begin position="182"/>
        <end position="198"/>
    </location>
</feature>
<feature type="turn" evidence="18">
    <location>
        <begin position="200"/>
        <end position="202"/>
    </location>
</feature>
<feature type="helix" evidence="18">
    <location>
        <begin position="205"/>
        <end position="228"/>
    </location>
</feature>
<feature type="strand" evidence="18">
    <location>
        <begin position="229"/>
        <end position="233"/>
    </location>
</feature>
<feature type="turn" evidence="18">
    <location>
        <begin position="234"/>
        <end position="237"/>
    </location>
</feature>
<feature type="helix" evidence="18">
    <location>
        <begin position="238"/>
        <end position="252"/>
    </location>
</feature>
<feature type="helix" evidence="18">
    <location>
        <begin position="262"/>
        <end position="278"/>
    </location>
</feature>
<feature type="helix" evidence="18">
    <location>
        <begin position="280"/>
        <end position="283"/>
    </location>
</feature>
<feature type="turn" evidence="18">
    <location>
        <begin position="284"/>
        <end position="286"/>
    </location>
</feature>
<feature type="helix" evidence="18">
    <location>
        <begin position="287"/>
        <end position="308"/>
    </location>
</feature>
<feature type="turn" evidence="18">
    <location>
        <begin position="309"/>
        <end position="311"/>
    </location>
</feature>
<feature type="helix" evidence="18">
    <location>
        <begin position="329"/>
        <end position="344"/>
    </location>
</feature>
<feature type="turn" evidence="18">
    <location>
        <begin position="347"/>
        <end position="349"/>
    </location>
</feature>
<feature type="helix" evidence="18">
    <location>
        <begin position="350"/>
        <end position="367"/>
    </location>
</feature>
<feature type="helix" evidence="18">
    <location>
        <begin position="372"/>
        <end position="380"/>
    </location>
</feature>
<feature type="helix" evidence="18">
    <location>
        <begin position="382"/>
        <end position="388"/>
    </location>
</feature>
<feature type="helix" evidence="18">
    <location>
        <begin position="398"/>
        <end position="412"/>
    </location>
</feature>
<feature type="helix" evidence="18">
    <location>
        <begin position="414"/>
        <end position="437"/>
    </location>
</feature>
<feature type="helix" evidence="18">
    <location>
        <begin position="441"/>
        <end position="443"/>
    </location>
</feature>
<feature type="helix" evidence="18">
    <location>
        <begin position="444"/>
        <end position="456"/>
    </location>
</feature>
<feature type="helix" evidence="18">
    <location>
        <begin position="458"/>
        <end position="466"/>
    </location>
</feature>
<feature type="helix" evidence="18">
    <location>
        <begin position="474"/>
        <end position="480"/>
    </location>
</feature>
<feature type="helix" evidence="18">
    <location>
        <begin position="482"/>
        <end position="486"/>
    </location>
</feature>
<feature type="helix" evidence="18">
    <location>
        <begin position="492"/>
        <end position="504"/>
    </location>
</feature>
<feature type="helix" evidence="18">
    <location>
        <begin position="505"/>
        <end position="508"/>
    </location>
</feature>
<feature type="helix" evidence="18">
    <location>
        <begin position="511"/>
        <end position="525"/>
    </location>
</feature>
<feature type="helix" evidence="18">
    <location>
        <begin position="531"/>
        <end position="550"/>
    </location>
</feature>
<feature type="helix" evidence="18">
    <location>
        <begin position="554"/>
        <end position="560"/>
    </location>
</feature>
<feature type="helix" evidence="18">
    <location>
        <begin position="561"/>
        <end position="572"/>
    </location>
</feature>
<feature type="helix" evidence="18">
    <location>
        <begin position="577"/>
        <end position="590"/>
    </location>
</feature>
<feature type="helix" evidence="18">
    <location>
        <begin position="595"/>
        <end position="600"/>
    </location>
</feature>
<feature type="helix" evidence="18">
    <location>
        <begin position="602"/>
        <end position="615"/>
    </location>
</feature>
<feature type="turn" evidence="18">
    <location>
        <begin position="616"/>
        <end position="618"/>
    </location>
</feature>
<feature type="helix" evidence="18">
    <location>
        <begin position="620"/>
        <end position="634"/>
    </location>
</feature>
<feature type="helix" evidence="18">
    <location>
        <begin position="637"/>
        <end position="656"/>
    </location>
</feature>
<feature type="helix" evidence="18">
    <location>
        <begin position="659"/>
        <end position="661"/>
    </location>
</feature>
<feature type="helix" evidence="18">
    <location>
        <begin position="666"/>
        <end position="680"/>
    </location>
</feature>
<feature type="helix" evidence="18">
    <location>
        <begin position="687"/>
        <end position="691"/>
    </location>
</feature>
<feature type="helix" evidence="18">
    <location>
        <begin position="693"/>
        <end position="703"/>
    </location>
</feature>
<feature type="helix" evidence="18">
    <location>
        <begin position="707"/>
        <end position="723"/>
    </location>
</feature>
<feature type="helix" evidence="18">
    <location>
        <begin position="725"/>
        <end position="730"/>
    </location>
</feature>
<feature type="helix" evidence="18">
    <location>
        <begin position="739"/>
        <end position="750"/>
    </location>
</feature>
<feature type="helix" evidence="18">
    <location>
        <begin position="757"/>
        <end position="760"/>
    </location>
</feature>
<feature type="helix" evidence="18">
    <location>
        <begin position="763"/>
        <end position="773"/>
    </location>
</feature>
<feature type="strand" evidence="18">
    <location>
        <begin position="774"/>
        <end position="776"/>
    </location>
</feature>
<feature type="helix" evidence="18">
    <location>
        <begin position="780"/>
        <end position="795"/>
    </location>
</feature>
<feature type="helix" evidence="18">
    <location>
        <begin position="799"/>
        <end position="815"/>
    </location>
</feature>
<feature type="helix" evidence="18">
    <location>
        <begin position="817"/>
        <end position="825"/>
    </location>
</feature>
<feature type="strand" evidence="18">
    <location>
        <begin position="831"/>
        <end position="833"/>
    </location>
</feature>
<feature type="helix" evidence="18">
    <location>
        <begin position="835"/>
        <end position="844"/>
    </location>
</feature>
<feature type="helix" evidence="18">
    <location>
        <begin position="847"/>
        <end position="849"/>
    </location>
</feature>
<feature type="helix" evidence="18">
    <location>
        <begin position="853"/>
        <end position="872"/>
    </location>
</feature>
<feature type="helix" evidence="18">
    <location>
        <begin position="876"/>
        <end position="879"/>
    </location>
</feature>
<feature type="strand" evidence="18">
    <location>
        <begin position="882"/>
        <end position="884"/>
    </location>
</feature>
<feature type="strand" evidence="18">
    <location>
        <begin position="891"/>
        <end position="893"/>
    </location>
</feature>
<feature type="helix" evidence="18">
    <location>
        <begin position="898"/>
        <end position="902"/>
    </location>
</feature>
<feature type="strand" evidence="18">
    <location>
        <begin position="910"/>
        <end position="912"/>
    </location>
</feature>
<feature type="helix" evidence="18">
    <location>
        <begin position="913"/>
        <end position="932"/>
    </location>
</feature>
<feature type="helix" evidence="18">
    <location>
        <begin position="998"/>
        <end position="1001"/>
    </location>
</feature>
<feature type="helix" evidence="18">
    <location>
        <begin position="1004"/>
        <end position="1016"/>
    </location>
</feature>
<feature type="helix" evidence="18">
    <location>
        <begin position="1021"/>
        <end position="1025"/>
    </location>
</feature>
<feature type="helix" evidence="18">
    <location>
        <begin position="1030"/>
        <end position="1037"/>
    </location>
</feature>
<organism>
    <name type="scientific">Homo sapiens</name>
    <name type="common">Human</name>
    <dbReference type="NCBI Taxonomy" id="9606"/>
    <lineage>
        <taxon>Eukaryota</taxon>
        <taxon>Metazoa</taxon>
        <taxon>Chordata</taxon>
        <taxon>Craniata</taxon>
        <taxon>Vertebrata</taxon>
        <taxon>Euteleostomi</taxon>
        <taxon>Mammalia</taxon>
        <taxon>Eutheria</taxon>
        <taxon>Euarchontoglires</taxon>
        <taxon>Primates</taxon>
        <taxon>Haplorrhini</taxon>
        <taxon>Catarrhini</taxon>
        <taxon>Hominidae</taxon>
        <taxon>Homo</taxon>
    </lineage>
</organism>
<name>IPO9_HUMAN</name>
<protein>
    <recommendedName>
        <fullName evidence="11">Importin-9</fullName>
        <shortName evidence="10">Imp9</shortName>
    </recommendedName>
    <alternativeName>
        <fullName>Ran-binding protein 9</fullName>
        <shortName>RanBP9</shortName>
    </alternativeName>
</protein>
<sequence>MAAAAAAGAASGLPGPVAQGLKEALVDTLTGILSPVQEVRAAAEEQIKVLEVTEEFGVHLAELTVDPQGALAIRQLASVILKQYVETHWCAQSEKFRPPETTERAKIVIRELLPNGLRESISKVRSSVAYAVSAIAHWDWPEAWPQLFNLLMEMLVSGDLNAVHGAMRVLTEFTREVTDTQMPLVAPVILPEMYKIFTMAEVYGIRTRSRAVEIFTTCAHMICNMEELEKGAAKVLIFPVVQQFTEAFVQALQIPDGPTSDSGFKMEVLKAVTALVKNFPKHMVSSMQQILPIVWNTLTESAAFYVRTEVNYTEEVEDPVDSDGEVLGFENLVFSIFEFVHALLENSKFKSTVKKALPELIYYIILYMQITEEQIKVWTANPQQFVEDEDDDTFSYTVRIAAQDLLLAVATDFQNESAAALAAAATRHLQEAEQTKNSGTEHWWKIHEACMLALGSVKAIITDSVKNGRIHFDMHGFLTNVILADLNLSVSPFLLGRALWAASRFTVAMSPELIQQFLQATVSGLHETQPPSVRISAVRAIWGYCDQLKVSESTHVLQPFLPSILDGLIHLAAQFSSEVLNLVMETLCIVCTVDPEFTASMESKICPFTIAIFLKYSNDPVVASLAQDIFKELSQIEACQGPMQMRLIPTLVSIMQAPADKIPAGLCATAIDILTTVVRNTKPPLSQLLICQAFPAVAQCTLHTDDNATMQNGGECLRAYVSVTLEQVAQWHDEQGHNGLWYVMQVVSQLLDPRTSEFTAAFVGRLVSTLISKAGRELGENLDQILRAILSKMQQAETLSVMQSLIMVFAHLVHTQLEPLLEFLCSLPGPTGKPALEFVMAEWTSRQHLFYGQYEGKVSSVALCKLLQHGINADDKRLQDIRVKGEEIYSMDEGIRTRSKSAKNPERWTNIPLLVKILKLIINELSNVMEANAARQATPAEWSQDDSNDMWEDQEEEEEEEEDGLAGQLLSDILATSKYEEDYYEDDEEDDPDALKDPLYQIDLQAYLTDFLCQFAQQPCYIMFSGHLNDNERRVLQTIGI</sequence>